<protein>
    <recommendedName>
        <fullName evidence="4">Long-chain fatty acid transport protein 1</fullName>
    </recommendedName>
    <alternativeName>
        <fullName>Arachidonate--CoA ligase</fullName>
        <ecNumber evidence="1">6.2.1.15</ecNumber>
    </alternativeName>
    <alternativeName>
        <fullName>Fatty acid transport protein 1</fullName>
        <shortName>FATP-1</shortName>
    </alternativeName>
    <alternativeName>
        <fullName>Long-chain-fatty-acid--CoA ligase</fullName>
        <ecNumber evidence="1">6.2.1.3</ecNumber>
    </alternativeName>
    <alternativeName>
        <fullName evidence="2">Solute carrier family 27 member 1</fullName>
    </alternativeName>
    <alternativeName>
        <fullName>Very long-chain acyl-CoA synthetase</fullName>
        <ecNumber evidence="1">6.2.1.-</ecNumber>
    </alternativeName>
</protein>
<comment type="function">
    <text evidence="1 2">Mediates the import of long-chain fatty acids (LCFA) into the cell by facilitating their transport at the plasma membrane. Also functions as an acyl-CoA ligase catalyzing the ATP-dependent formation of fatty acyl-CoA using LCFA and very-long-chain fatty acids (VLCFA) as substrates, which prevents fatty acid efflux from cells and might drive more fatty acid uptake. May act directly as a bona fide transporter, or alternatively, in a cytoplasmic or membrane-associated multimeric protein complex to trap and draw fatty acids towards accumulation. Plays a pivotal role in regulating available LCFA substrates from exogenous sources in tissues undergoing high levels of beta-oxidation or triglyceride synthesis. May be involved in regulation of cholesterol metabolism. Probably involved in fatty acid transport across the blood barrier (By similarity).</text>
</comment>
<comment type="catalytic activity">
    <reaction evidence="1">
        <text>a fatty acid(in) = a fatty acid(out)</text>
        <dbReference type="Rhea" id="RHEA:38879"/>
        <dbReference type="ChEBI" id="CHEBI:28868"/>
    </reaction>
</comment>
<comment type="catalytic activity">
    <reaction evidence="2">
        <text>(9Z)-octadecenoate(out) = (9Z)-octadecenoate(in)</text>
        <dbReference type="Rhea" id="RHEA:33655"/>
        <dbReference type="ChEBI" id="CHEBI:30823"/>
    </reaction>
</comment>
<comment type="catalytic activity">
    <reaction evidence="2">
        <text>hexadecanoate(out) = hexadecanoate(in)</text>
        <dbReference type="Rhea" id="RHEA:45256"/>
        <dbReference type="ChEBI" id="CHEBI:7896"/>
    </reaction>
</comment>
<comment type="catalytic activity">
    <reaction evidence="1">
        <text>(5Z,8Z,11Z,14Z)-eicosatetraenoate(out) = (5Z,8Z,11Z,14Z)-eicosatetraenoate(in)</text>
        <dbReference type="Rhea" id="RHEA:71395"/>
        <dbReference type="ChEBI" id="CHEBI:32395"/>
    </reaction>
</comment>
<comment type="catalytic activity">
    <reaction evidence="2">
        <text>(9Z,12Z)-octadecadienoate(out) = (9Z,12Z)-octadecadienoate(in)</text>
        <dbReference type="Rhea" id="RHEA:45264"/>
        <dbReference type="ChEBI" id="CHEBI:30245"/>
    </reaction>
</comment>
<comment type="catalytic activity">
    <reaction evidence="1">
        <text>a long-chain fatty acid + ATP + CoA = a long-chain fatty acyl-CoA + AMP + diphosphate</text>
        <dbReference type="Rhea" id="RHEA:15421"/>
        <dbReference type="ChEBI" id="CHEBI:30616"/>
        <dbReference type="ChEBI" id="CHEBI:33019"/>
        <dbReference type="ChEBI" id="CHEBI:57287"/>
        <dbReference type="ChEBI" id="CHEBI:57560"/>
        <dbReference type="ChEBI" id="CHEBI:83139"/>
        <dbReference type="ChEBI" id="CHEBI:456215"/>
        <dbReference type="EC" id="6.2.1.3"/>
    </reaction>
    <physiologicalReaction direction="left-to-right" evidence="1">
        <dbReference type="Rhea" id="RHEA:15422"/>
    </physiologicalReaction>
</comment>
<comment type="catalytic activity">
    <reaction evidence="1">
        <text>(5Z,8Z,11Z,14Z)-eicosatetraenoate + ATP + CoA = (5Z,8Z,11Z,14Z)-eicosatetraenoyl-CoA + AMP + diphosphate</text>
        <dbReference type="Rhea" id="RHEA:19713"/>
        <dbReference type="ChEBI" id="CHEBI:30616"/>
        <dbReference type="ChEBI" id="CHEBI:32395"/>
        <dbReference type="ChEBI" id="CHEBI:33019"/>
        <dbReference type="ChEBI" id="CHEBI:57287"/>
        <dbReference type="ChEBI" id="CHEBI:57368"/>
        <dbReference type="ChEBI" id="CHEBI:456215"/>
        <dbReference type="EC" id="6.2.1.15"/>
    </reaction>
    <physiologicalReaction direction="left-to-right" evidence="1">
        <dbReference type="Rhea" id="RHEA:19714"/>
    </physiologicalReaction>
</comment>
<comment type="catalytic activity">
    <reaction evidence="1">
        <text>a very long-chain fatty acid + ATP + CoA = a very long-chain fatty acyl-CoA + AMP + diphosphate</text>
        <dbReference type="Rhea" id="RHEA:54536"/>
        <dbReference type="ChEBI" id="CHEBI:30616"/>
        <dbReference type="ChEBI" id="CHEBI:33019"/>
        <dbReference type="ChEBI" id="CHEBI:57287"/>
        <dbReference type="ChEBI" id="CHEBI:58950"/>
        <dbReference type="ChEBI" id="CHEBI:138261"/>
        <dbReference type="ChEBI" id="CHEBI:456215"/>
    </reaction>
    <physiologicalReaction direction="left-to-right" evidence="1">
        <dbReference type="Rhea" id="RHEA:54537"/>
    </physiologicalReaction>
</comment>
<comment type="catalytic activity">
    <reaction evidence="1">
        <text>tetracosanoate + ATP + CoA = tetracosanoyl-CoA + AMP + diphosphate</text>
        <dbReference type="Rhea" id="RHEA:33639"/>
        <dbReference type="ChEBI" id="CHEBI:30616"/>
        <dbReference type="ChEBI" id="CHEBI:31014"/>
        <dbReference type="ChEBI" id="CHEBI:33019"/>
        <dbReference type="ChEBI" id="CHEBI:57287"/>
        <dbReference type="ChEBI" id="CHEBI:65052"/>
        <dbReference type="ChEBI" id="CHEBI:456215"/>
    </reaction>
    <physiologicalReaction direction="left-to-right" evidence="1">
        <dbReference type="Rhea" id="RHEA:33640"/>
    </physiologicalReaction>
</comment>
<comment type="activity regulation">
    <text evidence="1">Inhibited by Triacsin C.</text>
</comment>
<comment type="subunit">
    <text evidence="1 2">Self-associates. May function as a homodimer. Interacts with EPRS1; mediates the translocation of SLC27A1 from the cytoplasm to the plasma membrane thereby increasing the uptake of long-chain fatty acids (By similarity). Interacts with DGAT2 and this interaction is enhanced in the presence of ZFYVE1 (By similarity).</text>
</comment>
<comment type="subcellular location">
    <subcellularLocation>
        <location evidence="1">Cell membrane</location>
        <topology evidence="1">Single-pass membrane protein</topology>
    </subcellularLocation>
    <subcellularLocation>
        <location evidence="1">Endomembrane system</location>
        <topology evidence="1">Single-pass membrane protein</topology>
    </subcellularLocation>
    <subcellularLocation>
        <location evidence="1">Cytoplasm</location>
    </subcellularLocation>
    <text evidence="1">Plasma membrane and intracellular membranes, at least in adipocytes. In adipocytes, but not myocytes, insulin via the mTORC1 signaling pathway induces a rapid translocation of SLC27A1 from intracellular compartments to the plasma membrane, paralleled by increased LCFA uptake. Insulin-dependent translocation from the cytoplasm to the cell membrane is regulated by EPRS1. Predominantly cytoplasmic in myocytes.</text>
</comment>
<comment type="similarity">
    <text evidence="4">Belongs to the ATP-dependent AMP-binding enzyme family.</text>
</comment>
<name>S27A1_BOVIN</name>
<sequence>MRAPGAGSASVASLVLLWLLGLPWTWSTAAALGVYVGGGGWRFLRIVCKTARRDLFGLSVLIRVRLELRRHQRARHTIPQIFQAVVQRQPERLALVDAGSGACWTFAQLDAYSNAVANLFRRLGFAPGDVVAIFMEGRPEFVGLWLGLAKAGVEAALLNVNLRREPLAFCLGTSGAKALVFGGELAAAVAEMSGELGKSLVKFCSGDVGPDGVFPDTQLLDPLLKETSTAPLAQPPGKGMDDRLFYIYTSGTTGLPKAAIIVHSRYYRIAAFGHYSYSMQAADVLYDCLPLYHSAGNIMGVGQCLIYGLTVVLRKKFSASRFWDDCVKYNCTVVQYIGEICRYLLKQPVREAEGRHRVRLAVGNGLRPSIWEEFTERFGVRQIGEFYGATECNCSIANMDGKVGSRGFNSRILPHVYPIRLVKVNEDTMELLRDAQGLCIPCQTGEPGLLVGQINQQDPLRRFDGYISESATSKKIAHSVFRKGDSAYLSGDVLVMDELGYMYFRDRSGDTFRWRGENVSTTEVEGVLSRLLGQTDVAVYGVAVPGVEGKACMAAIADPHGRLSPNALYEELQKVLAPYARPIFLRLLPQVDTTGTFKIQKTRLQHEGFDPRQTSDRLFFLDLKQGHYLPLDQGVYTRICSGAFAL</sequence>
<feature type="chain" id="PRO_0000193200" description="Long-chain fatty acid transport protein 1">
    <location>
        <begin position="1"/>
        <end position="646"/>
    </location>
</feature>
<feature type="topological domain" description="Extracellular" evidence="1">
    <location>
        <begin position="1"/>
        <end position="13"/>
    </location>
</feature>
<feature type="transmembrane region" description="Helical" evidence="3">
    <location>
        <begin position="14"/>
        <end position="34"/>
    </location>
</feature>
<feature type="topological domain" description="Cytoplasmic" evidence="1">
    <location>
        <begin position="35"/>
        <end position="646"/>
    </location>
</feature>
<feature type="region of interest" description="Sufficient for oligomerization" evidence="1">
    <location>
        <begin position="191"/>
        <end position="475"/>
    </location>
</feature>
<feature type="binding site" evidence="1">
    <location>
        <begin position="246"/>
        <end position="257"/>
    </location>
    <ligand>
        <name>AMP</name>
        <dbReference type="ChEBI" id="CHEBI:456215"/>
    </ligand>
</feature>
<organism>
    <name type="scientific">Bos taurus</name>
    <name type="common">Bovine</name>
    <dbReference type="NCBI Taxonomy" id="9913"/>
    <lineage>
        <taxon>Eukaryota</taxon>
        <taxon>Metazoa</taxon>
        <taxon>Chordata</taxon>
        <taxon>Craniata</taxon>
        <taxon>Vertebrata</taxon>
        <taxon>Euteleostomi</taxon>
        <taxon>Mammalia</taxon>
        <taxon>Eutheria</taxon>
        <taxon>Laurasiatheria</taxon>
        <taxon>Artiodactyla</taxon>
        <taxon>Ruminantia</taxon>
        <taxon>Pecora</taxon>
        <taxon>Bovidae</taxon>
        <taxon>Bovinae</taxon>
        <taxon>Bos</taxon>
    </lineage>
</organism>
<accession>Q3ZKN0</accession>
<keyword id="KW-1003">Cell membrane</keyword>
<keyword id="KW-0963">Cytoplasm</keyword>
<keyword id="KW-0276">Fatty acid metabolism</keyword>
<keyword id="KW-0436">Ligase</keyword>
<keyword id="KW-0443">Lipid metabolism</keyword>
<keyword id="KW-0445">Lipid transport</keyword>
<keyword id="KW-0472">Membrane</keyword>
<keyword id="KW-0547">Nucleotide-binding</keyword>
<keyword id="KW-1185">Reference proteome</keyword>
<keyword id="KW-0812">Transmembrane</keyword>
<keyword id="KW-1133">Transmembrane helix</keyword>
<keyword id="KW-0813">Transport</keyword>
<proteinExistence type="evidence at transcript level"/>
<gene>
    <name evidence="2" type="primary">SLC27A1</name>
    <name type="synonym">FATP1</name>
</gene>
<dbReference type="EC" id="6.2.1.15" evidence="1"/>
<dbReference type="EC" id="6.2.1.3" evidence="1"/>
<dbReference type="EC" id="6.2.1.-" evidence="1"/>
<dbReference type="EMBL" id="AY738459">
    <property type="protein sequence ID" value="AAW68434.1"/>
    <property type="molecule type" value="mRNA"/>
</dbReference>
<dbReference type="SMR" id="Q3ZKN0"/>
<dbReference type="FunCoup" id="Q3ZKN0">
    <property type="interactions" value="202"/>
</dbReference>
<dbReference type="STRING" id="9913.ENSBTAP00000051970"/>
<dbReference type="PaxDb" id="9913-ENSBTAP00000050547"/>
<dbReference type="eggNOG" id="KOG1179">
    <property type="taxonomic scope" value="Eukaryota"/>
</dbReference>
<dbReference type="InParanoid" id="Q3ZKN0"/>
<dbReference type="OrthoDB" id="288590at2759"/>
<dbReference type="Proteomes" id="UP000009136">
    <property type="component" value="Unplaced"/>
</dbReference>
<dbReference type="GO" id="GO:0005789">
    <property type="term" value="C:endoplasmic reticulum membrane"/>
    <property type="evidence" value="ECO:0000318"/>
    <property type="project" value="GO_Central"/>
</dbReference>
<dbReference type="GO" id="GO:0005886">
    <property type="term" value="C:plasma membrane"/>
    <property type="evidence" value="ECO:0000250"/>
    <property type="project" value="UniProtKB"/>
</dbReference>
<dbReference type="GO" id="GO:0047676">
    <property type="term" value="F:arachidonate-CoA ligase activity"/>
    <property type="evidence" value="ECO:0007669"/>
    <property type="project" value="UniProtKB-EC"/>
</dbReference>
<dbReference type="GO" id="GO:0005324">
    <property type="term" value="F:long-chain fatty acid transmembrane transporter activity"/>
    <property type="evidence" value="ECO:0000318"/>
    <property type="project" value="GO_Central"/>
</dbReference>
<dbReference type="GO" id="GO:0004467">
    <property type="term" value="F:long-chain fatty acid-CoA ligase activity"/>
    <property type="evidence" value="ECO:0000250"/>
    <property type="project" value="UniProtKB"/>
</dbReference>
<dbReference type="GO" id="GO:0000166">
    <property type="term" value="F:nucleotide binding"/>
    <property type="evidence" value="ECO:0007669"/>
    <property type="project" value="UniProtKB-KW"/>
</dbReference>
<dbReference type="GO" id="GO:0090434">
    <property type="term" value="F:oleoyl-CoA ligase activity"/>
    <property type="evidence" value="ECO:0000318"/>
    <property type="project" value="GO_Central"/>
</dbReference>
<dbReference type="GO" id="GO:0031957">
    <property type="term" value="F:very long-chain fatty acid-CoA ligase activity"/>
    <property type="evidence" value="ECO:0007669"/>
    <property type="project" value="RHEA"/>
</dbReference>
<dbReference type="GO" id="GO:0044539">
    <property type="term" value="P:long-chain fatty acid import into cell"/>
    <property type="evidence" value="ECO:0000250"/>
    <property type="project" value="UniProtKB"/>
</dbReference>
<dbReference type="GO" id="GO:0001676">
    <property type="term" value="P:long-chain fatty acid metabolic process"/>
    <property type="evidence" value="ECO:0000318"/>
    <property type="project" value="GO_Central"/>
</dbReference>
<dbReference type="GO" id="GO:0001579">
    <property type="term" value="P:medium-chain fatty acid transport"/>
    <property type="evidence" value="ECO:0000318"/>
    <property type="project" value="GO_Central"/>
</dbReference>
<dbReference type="GO" id="GO:0010867">
    <property type="term" value="P:positive regulation of triglyceride biosynthetic process"/>
    <property type="evidence" value="ECO:0000250"/>
    <property type="project" value="UniProtKB"/>
</dbReference>
<dbReference type="FunFam" id="3.30.300.30:FF:000002">
    <property type="entry name" value="Long-chain fatty acid transport protein 1"/>
    <property type="match status" value="1"/>
</dbReference>
<dbReference type="FunFam" id="3.40.50.12780:FF:000008">
    <property type="entry name" value="Long-chain fatty acid transport protein 4"/>
    <property type="match status" value="1"/>
</dbReference>
<dbReference type="Gene3D" id="3.30.300.30">
    <property type="match status" value="1"/>
</dbReference>
<dbReference type="Gene3D" id="3.40.50.12780">
    <property type="entry name" value="N-terminal domain of ligase-like"/>
    <property type="match status" value="1"/>
</dbReference>
<dbReference type="InterPro" id="IPR025110">
    <property type="entry name" value="AMP-bd_C"/>
</dbReference>
<dbReference type="InterPro" id="IPR045851">
    <property type="entry name" value="AMP-bd_C_sf"/>
</dbReference>
<dbReference type="InterPro" id="IPR020845">
    <property type="entry name" value="AMP-binding_CS"/>
</dbReference>
<dbReference type="InterPro" id="IPR000873">
    <property type="entry name" value="AMP-dep_synth/lig_dom"/>
</dbReference>
<dbReference type="InterPro" id="IPR042099">
    <property type="entry name" value="ANL_N_sf"/>
</dbReference>
<dbReference type="PANTHER" id="PTHR43107">
    <property type="entry name" value="LONG-CHAIN FATTY ACID TRANSPORT PROTEIN"/>
    <property type="match status" value="1"/>
</dbReference>
<dbReference type="PANTHER" id="PTHR43107:SF7">
    <property type="entry name" value="LONG-CHAIN FATTY ACID TRANSPORT PROTEIN 1"/>
    <property type="match status" value="1"/>
</dbReference>
<dbReference type="Pfam" id="PF00501">
    <property type="entry name" value="AMP-binding"/>
    <property type="match status" value="1"/>
</dbReference>
<dbReference type="Pfam" id="PF13193">
    <property type="entry name" value="AMP-binding_C"/>
    <property type="match status" value="1"/>
</dbReference>
<dbReference type="SUPFAM" id="SSF56801">
    <property type="entry name" value="Acetyl-CoA synthetase-like"/>
    <property type="match status" value="1"/>
</dbReference>
<dbReference type="PROSITE" id="PS00455">
    <property type="entry name" value="AMP_BINDING"/>
    <property type="match status" value="1"/>
</dbReference>
<reference key="1">
    <citation type="submission" date="2004-08" db="EMBL/GenBank/DDBJ databases">
        <title>Bovine solute carrier family 27 member 1 (SLC27A1) gene: structural and functional analysis.</title>
        <authorList>
            <person name="Ordovas L."/>
            <person name="Zaragoza P."/>
            <person name="Rodellar C."/>
        </authorList>
    </citation>
    <scope>NUCLEOTIDE SEQUENCE [MRNA]</scope>
</reference>
<evidence type="ECO:0000250" key="1">
    <source>
        <dbReference type="UniProtKB" id="Q60714"/>
    </source>
</evidence>
<evidence type="ECO:0000250" key="2">
    <source>
        <dbReference type="UniProtKB" id="Q6PCB7"/>
    </source>
</evidence>
<evidence type="ECO:0000255" key="3"/>
<evidence type="ECO:0000305" key="4"/>